<protein>
    <recommendedName>
        <fullName evidence="1">ATP synthase subunit delta, chloroplastic</fullName>
    </recommendedName>
    <alternativeName>
        <fullName evidence="1">ATP synthase F(1) sector subunit delta</fullName>
    </alternativeName>
    <alternativeName>
        <fullName evidence="1">F-type ATPase subunit delta</fullName>
    </alternativeName>
</protein>
<dbReference type="EMBL" id="AY741371">
    <property type="protein sequence ID" value="AAX13868.1"/>
    <property type="molecule type" value="Genomic_DNA"/>
</dbReference>
<dbReference type="RefSeq" id="YP_277369.1">
    <property type="nucleotide sequence ID" value="NC_007288.1"/>
</dbReference>
<dbReference type="SMR" id="Q4G398"/>
<dbReference type="STRING" id="2903.Q4G398"/>
<dbReference type="GeneID" id="3562445"/>
<dbReference type="GO" id="GO:0009535">
    <property type="term" value="C:chloroplast thylakoid membrane"/>
    <property type="evidence" value="ECO:0007669"/>
    <property type="project" value="UniProtKB-SubCell"/>
</dbReference>
<dbReference type="GO" id="GO:0045259">
    <property type="term" value="C:proton-transporting ATP synthase complex"/>
    <property type="evidence" value="ECO:0007669"/>
    <property type="project" value="UniProtKB-KW"/>
</dbReference>
<dbReference type="GO" id="GO:0046933">
    <property type="term" value="F:proton-transporting ATP synthase activity, rotational mechanism"/>
    <property type="evidence" value="ECO:0007669"/>
    <property type="project" value="UniProtKB-UniRule"/>
</dbReference>
<dbReference type="Gene3D" id="1.10.520.20">
    <property type="entry name" value="N-terminal domain of the delta subunit of the F1F0-ATP synthase"/>
    <property type="match status" value="1"/>
</dbReference>
<dbReference type="HAMAP" id="MF_01416">
    <property type="entry name" value="ATP_synth_delta_bact"/>
    <property type="match status" value="1"/>
</dbReference>
<dbReference type="InterPro" id="IPR026015">
    <property type="entry name" value="ATP_synth_OSCP/delta_N_sf"/>
</dbReference>
<dbReference type="InterPro" id="IPR020781">
    <property type="entry name" value="ATPase_OSCP/d_CS"/>
</dbReference>
<dbReference type="InterPro" id="IPR000711">
    <property type="entry name" value="ATPase_OSCP/dsu"/>
</dbReference>
<dbReference type="NCBIfam" id="TIGR01145">
    <property type="entry name" value="ATP_synt_delta"/>
    <property type="match status" value="1"/>
</dbReference>
<dbReference type="NCBIfam" id="NF004402">
    <property type="entry name" value="PRK05758.2-2"/>
    <property type="match status" value="1"/>
</dbReference>
<dbReference type="PANTHER" id="PTHR11910">
    <property type="entry name" value="ATP SYNTHASE DELTA CHAIN"/>
    <property type="match status" value="1"/>
</dbReference>
<dbReference type="Pfam" id="PF00213">
    <property type="entry name" value="OSCP"/>
    <property type="match status" value="1"/>
</dbReference>
<dbReference type="PRINTS" id="PR00125">
    <property type="entry name" value="ATPASEDELTA"/>
</dbReference>
<dbReference type="SUPFAM" id="SSF47928">
    <property type="entry name" value="N-terminal domain of the delta subunit of the F1F0-ATP synthase"/>
    <property type="match status" value="1"/>
</dbReference>
<dbReference type="PROSITE" id="PS00389">
    <property type="entry name" value="ATPASE_DELTA"/>
    <property type="match status" value="1"/>
</dbReference>
<reference key="1">
    <citation type="journal article" date="2005" name="DNA Res.">
        <title>The complete plastid genome sequence of the haptophyte Emiliania huxleyi: a comparison to other plastid genomes.</title>
        <authorList>
            <person name="Sanchez-Puerta M.V."/>
            <person name="Bachvaroff T.R."/>
            <person name="Delwiche C.F."/>
        </authorList>
    </citation>
    <scope>NUCLEOTIDE SEQUENCE [LARGE SCALE GENOMIC DNA]</scope>
    <source>
        <strain>CCMP373 / CSIRO-CS-57 / BT6</strain>
    </source>
</reference>
<keyword id="KW-0066">ATP synthesis</keyword>
<keyword id="KW-0139">CF(1)</keyword>
<keyword id="KW-0150">Chloroplast</keyword>
<keyword id="KW-0375">Hydrogen ion transport</keyword>
<keyword id="KW-0406">Ion transport</keyword>
<keyword id="KW-0472">Membrane</keyword>
<keyword id="KW-0934">Plastid</keyword>
<keyword id="KW-0793">Thylakoid</keyword>
<keyword id="KW-0813">Transport</keyword>
<proteinExistence type="inferred from homology"/>
<name>ATPD_EMIHU</name>
<accession>Q4G398</accession>
<geneLocation type="chloroplast"/>
<evidence type="ECO:0000255" key="1">
    <source>
        <dbReference type="HAMAP-Rule" id="MF_01416"/>
    </source>
</evidence>
<sequence>MLVVKIAVPYAEALLELANANSSLKETTNDINIVSQFLANSSDLKKFLGNPLITRDAKKGVLKDVLGEQIGEKTLTFLMLLVDRGRIAYLDGIAYKFLELSYKEESIEIAKVTSSVQLSAQQQKTIAEKLKKITGAKQIKLALKVDPQLIGGFTIEIGSKLIDTSIRGQLKQISTLLGAV</sequence>
<comment type="function">
    <text evidence="1">F(1)F(0) ATP synthase produces ATP from ADP in the presence of a proton or sodium gradient. F-type ATPases consist of two structural domains, F(1) containing the extramembraneous catalytic core and F(0) containing the membrane proton channel, linked together by a central stalk and a peripheral stalk. During catalysis, ATP synthesis in the catalytic domain of F(1) is coupled via a rotary mechanism of the central stalk subunits to proton translocation.</text>
</comment>
<comment type="function">
    <text evidence="1">This protein is part of the stalk that links CF(0) to CF(1). It either transmits conformational changes from CF(0) to CF(1) or is implicated in proton conduction.</text>
</comment>
<comment type="subunit">
    <text evidence="1">F-type ATPases have 2 components, F(1) - the catalytic core - and F(0) - the membrane proton channel. F(1) has five subunits: alpha(3), beta(3), gamma(1), delta(1), epsilon(1). CF(0) has four main subunits: a(1), b(1), b'(1) and c(10-14). The alpha and beta chains form an alternating ring which encloses part of the gamma chain. F(1) is attached to F(0) by a central stalk formed by the gamma and epsilon chains, while a peripheral stalk is formed by the delta, b and b' chains.</text>
</comment>
<comment type="subcellular location">
    <subcellularLocation>
        <location evidence="1">Plastid</location>
        <location evidence="1">Chloroplast thylakoid membrane</location>
        <topology evidence="1">Peripheral membrane protein</topology>
    </subcellularLocation>
</comment>
<comment type="similarity">
    <text evidence="1">Belongs to the ATPase delta chain family.</text>
</comment>
<organism>
    <name type="scientific">Emiliania huxleyi</name>
    <name type="common">Coccolithophore</name>
    <name type="synonym">Pontosphaera huxleyi</name>
    <dbReference type="NCBI Taxonomy" id="2903"/>
    <lineage>
        <taxon>Eukaryota</taxon>
        <taxon>Haptista</taxon>
        <taxon>Haptophyta</taxon>
        <taxon>Prymnesiophyceae</taxon>
        <taxon>Isochrysidales</taxon>
        <taxon>Noelaerhabdaceae</taxon>
        <taxon>Emiliania</taxon>
    </lineage>
</organism>
<feature type="chain" id="PRO_0000371212" description="ATP synthase subunit delta, chloroplastic">
    <location>
        <begin position="1"/>
        <end position="180"/>
    </location>
</feature>
<gene>
    <name evidence="1" type="primary">atpD</name>
</gene>